<gene>
    <name evidence="1" type="primary">tsf</name>
    <name type="ordered locus">SeSA_A0242</name>
</gene>
<name>EFTS_SALSV</name>
<proteinExistence type="inferred from homology"/>
<evidence type="ECO:0000255" key="1">
    <source>
        <dbReference type="HAMAP-Rule" id="MF_00050"/>
    </source>
</evidence>
<comment type="function">
    <text evidence="1">Associates with the EF-Tu.GDP complex and induces the exchange of GDP to GTP. It remains bound to the aminoacyl-tRNA.EF-Tu.GTP complex up to the GTP hydrolysis stage on the ribosome.</text>
</comment>
<comment type="subcellular location">
    <subcellularLocation>
        <location evidence="1">Cytoplasm</location>
    </subcellularLocation>
</comment>
<comment type="similarity">
    <text evidence="1">Belongs to the EF-Ts family.</text>
</comment>
<organism>
    <name type="scientific">Salmonella schwarzengrund (strain CVM19633)</name>
    <dbReference type="NCBI Taxonomy" id="439843"/>
    <lineage>
        <taxon>Bacteria</taxon>
        <taxon>Pseudomonadati</taxon>
        <taxon>Pseudomonadota</taxon>
        <taxon>Gammaproteobacteria</taxon>
        <taxon>Enterobacterales</taxon>
        <taxon>Enterobacteriaceae</taxon>
        <taxon>Salmonella</taxon>
    </lineage>
</organism>
<reference key="1">
    <citation type="journal article" date="2011" name="J. Bacteriol.">
        <title>Comparative genomics of 28 Salmonella enterica isolates: evidence for CRISPR-mediated adaptive sublineage evolution.</title>
        <authorList>
            <person name="Fricke W.F."/>
            <person name="Mammel M.K."/>
            <person name="McDermott P.F."/>
            <person name="Tartera C."/>
            <person name="White D.G."/>
            <person name="Leclerc J.E."/>
            <person name="Ravel J."/>
            <person name="Cebula T.A."/>
        </authorList>
    </citation>
    <scope>NUCLEOTIDE SEQUENCE [LARGE SCALE GENOMIC DNA]</scope>
    <source>
        <strain>CVM19633</strain>
    </source>
</reference>
<feature type="chain" id="PRO_1000116788" description="Elongation factor Ts">
    <location>
        <begin position="1"/>
        <end position="283"/>
    </location>
</feature>
<feature type="region of interest" description="Involved in Mg(2+) ion dislocation from EF-Tu" evidence="1">
    <location>
        <begin position="80"/>
        <end position="83"/>
    </location>
</feature>
<accession>B4TXS2</accession>
<keyword id="KW-0963">Cytoplasm</keyword>
<keyword id="KW-0251">Elongation factor</keyword>
<keyword id="KW-0648">Protein biosynthesis</keyword>
<sequence length="283" mass="30358">MAEITASLVKELRERTGAGMMDCKKALTEANGDIELAIENMRKSGAIKAAKKAGNVAADGVIKTKIDGNVAFILEVNCQTDFVAKDAGFQAFADKVLDAAVAGKITDVEVLKAQFEEERVALVAKIGENINIRRVASLEGDVLGSYQHGARIGVLVAAKGADEELVKQLAMHVAASKPEFVKPEDVSADVVEKEYQVQLDIAMQSGKPKEIAEKMVEGRMKKFTGEVSLTGQPFVMEPSKSVGQLLKEHNADVTGFIRFEVGEGIEKVETDFAAEVAAMSKQS</sequence>
<dbReference type="EMBL" id="CP001127">
    <property type="protein sequence ID" value="ACF88874.1"/>
    <property type="molecule type" value="Genomic_DNA"/>
</dbReference>
<dbReference type="RefSeq" id="WP_000808106.1">
    <property type="nucleotide sequence ID" value="NC_011094.1"/>
</dbReference>
<dbReference type="SMR" id="B4TXS2"/>
<dbReference type="KEGG" id="sew:SeSA_A0242"/>
<dbReference type="HOGENOM" id="CLU_047155_0_2_6"/>
<dbReference type="Proteomes" id="UP000001865">
    <property type="component" value="Chromosome"/>
</dbReference>
<dbReference type="GO" id="GO:0005737">
    <property type="term" value="C:cytoplasm"/>
    <property type="evidence" value="ECO:0007669"/>
    <property type="project" value="UniProtKB-SubCell"/>
</dbReference>
<dbReference type="GO" id="GO:0003746">
    <property type="term" value="F:translation elongation factor activity"/>
    <property type="evidence" value="ECO:0007669"/>
    <property type="project" value="UniProtKB-UniRule"/>
</dbReference>
<dbReference type="CDD" id="cd14275">
    <property type="entry name" value="UBA_EF-Ts"/>
    <property type="match status" value="1"/>
</dbReference>
<dbReference type="FunFam" id="1.10.286.20:FF:000001">
    <property type="entry name" value="Elongation factor Ts"/>
    <property type="match status" value="1"/>
</dbReference>
<dbReference type="FunFam" id="1.10.8.10:FF:000001">
    <property type="entry name" value="Elongation factor Ts"/>
    <property type="match status" value="1"/>
</dbReference>
<dbReference type="FunFam" id="3.30.479.20:FF:000001">
    <property type="entry name" value="Elongation factor Ts"/>
    <property type="match status" value="1"/>
</dbReference>
<dbReference type="Gene3D" id="1.10.286.20">
    <property type="match status" value="1"/>
</dbReference>
<dbReference type="Gene3D" id="1.10.8.10">
    <property type="entry name" value="DNA helicase RuvA subunit, C-terminal domain"/>
    <property type="match status" value="1"/>
</dbReference>
<dbReference type="Gene3D" id="3.30.479.20">
    <property type="entry name" value="Elongation factor Ts, dimerisation domain"/>
    <property type="match status" value="2"/>
</dbReference>
<dbReference type="HAMAP" id="MF_00050">
    <property type="entry name" value="EF_Ts"/>
    <property type="match status" value="1"/>
</dbReference>
<dbReference type="InterPro" id="IPR036402">
    <property type="entry name" value="EF-Ts_dimer_sf"/>
</dbReference>
<dbReference type="InterPro" id="IPR001816">
    <property type="entry name" value="Transl_elong_EFTs/EF1B"/>
</dbReference>
<dbReference type="InterPro" id="IPR014039">
    <property type="entry name" value="Transl_elong_EFTs/EF1B_dimer"/>
</dbReference>
<dbReference type="InterPro" id="IPR018101">
    <property type="entry name" value="Transl_elong_Ts_CS"/>
</dbReference>
<dbReference type="InterPro" id="IPR009060">
    <property type="entry name" value="UBA-like_sf"/>
</dbReference>
<dbReference type="NCBIfam" id="TIGR00116">
    <property type="entry name" value="tsf"/>
    <property type="match status" value="1"/>
</dbReference>
<dbReference type="PANTHER" id="PTHR11741">
    <property type="entry name" value="ELONGATION FACTOR TS"/>
    <property type="match status" value="1"/>
</dbReference>
<dbReference type="PANTHER" id="PTHR11741:SF0">
    <property type="entry name" value="ELONGATION FACTOR TS, MITOCHONDRIAL"/>
    <property type="match status" value="1"/>
</dbReference>
<dbReference type="Pfam" id="PF00889">
    <property type="entry name" value="EF_TS"/>
    <property type="match status" value="1"/>
</dbReference>
<dbReference type="SUPFAM" id="SSF54713">
    <property type="entry name" value="Elongation factor Ts (EF-Ts), dimerisation domain"/>
    <property type="match status" value="2"/>
</dbReference>
<dbReference type="SUPFAM" id="SSF46934">
    <property type="entry name" value="UBA-like"/>
    <property type="match status" value="1"/>
</dbReference>
<dbReference type="PROSITE" id="PS01126">
    <property type="entry name" value="EF_TS_1"/>
    <property type="match status" value="1"/>
</dbReference>
<dbReference type="PROSITE" id="PS01127">
    <property type="entry name" value="EF_TS_2"/>
    <property type="match status" value="1"/>
</dbReference>
<protein>
    <recommendedName>
        <fullName evidence="1">Elongation factor Ts</fullName>
        <shortName evidence="1">EF-Ts</shortName>
    </recommendedName>
</protein>